<name>YBPD_SCHPO</name>
<dbReference type="EMBL" id="CU329671">
    <property type="protein sequence ID" value="CAA17911.1"/>
    <property type="molecule type" value="Genomic_DNA"/>
</dbReference>
<dbReference type="PIR" id="T39612">
    <property type="entry name" value="T39612"/>
</dbReference>
<dbReference type="RefSeq" id="NP_595934.1">
    <property type="nucleotide sequence ID" value="NM_001021842.2"/>
</dbReference>
<dbReference type="BioGRID" id="276469">
    <property type="interactions" value="266"/>
</dbReference>
<dbReference type="FunCoup" id="O42948">
    <property type="interactions" value="2"/>
</dbReference>
<dbReference type="STRING" id="284812.O42948"/>
<dbReference type="PaxDb" id="4896-SPBC16H5.13.1"/>
<dbReference type="EnsemblFungi" id="SPBC16H5.13.1">
    <property type="protein sequence ID" value="SPBC16H5.13.1:pep"/>
    <property type="gene ID" value="SPBC16H5.13"/>
</dbReference>
<dbReference type="PomBase" id="SPBC16H5.13"/>
<dbReference type="VEuPathDB" id="FungiDB:SPBC16H5.13"/>
<dbReference type="eggNOG" id="KOG4155">
    <property type="taxonomic scope" value="Eukaryota"/>
</dbReference>
<dbReference type="HOGENOM" id="CLU_295137_0_0_1"/>
<dbReference type="InParanoid" id="O42948"/>
<dbReference type="OMA" id="KECIIWK"/>
<dbReference type="Reactome" id="R-SPO-8951664">
    <property type="pathway name" value="Neddylation"/>
</dbReference>
<dbReference type="Reactome" id="R-SPO-983168">
    <property type="pathway name" value="Antigen processing: Ubiquitination &amp; Proteasome degradation"/>
</dbReference>
<dbReference type="PRO" id="PR:O42948"/>
<dbReference type="Proteomes" id="UP000002485">
    <property type="component" value="Chromosome II"/>
</dbReference>
<dbReference type="GO" id="GO:0005881">
    <property type="term" value="C:cytoplasmic microtubule"/>
    <property type="evidence" value="ECO:0000318"/>
    <property type="project" value="GO_Central"/>
</dbReference>
<dbReference type="GO" id="GO:0005829">
    <property type="term" value="C:cytosol"/>
    <property type="evidence" value="ECO:0007005"/>
    <property type="project" value="PomBase"/>
</dbReference>
<dbReference type="GO" id="GO:0000776">
    <property type="term" value="C:kinetochore"/>
    <property type="evidence" value="ECO:0000318"/>
    <property type="project" value="GO_Central"/>
</dbReference>
<dbReference type="GO" id="GO:0005875">
    <property type="term" value="C:microtubule associated complex"/>
    <property type="evidence" value="ECO:0000318"/>
    <property type="project" value="GO_Central"/>
</dbReference>
<dbReference type="GO" id="GO:0005635">
    <property type="term" value="C:nuclear envelope"/>
    <property type="evidence" value="ECO:0000318"/>
    <property type="project" value="GO_Central"/>
</dbReference>
<dbReference type="GO" id="GO:0005634">
    <property type="term" value="C:nucleus"/>
    <property type="evidence" value="ECO:0007005"/>
    <property type="project" value="PomBase"/>
</dbReference>
<dbReference type="GO" id="GO:0070840">
    <property type="term" value="F:dynein complex binding"/>
    <property type="evidence" value="ECO:0000318"/>
    <property type="project" value="GO_Central"/>
</dbReference>
<dbReference type="GO" id="GO:0051010">
    <property type="term" value="F:microtubule plus-end binding"/>
    <property type="evidence" value="ECO:0000318"/>
    <property type="project" value="GO_Central"/>
</dbReference>
<dbReference type="GO" id="GO:0000132">
    <property type="term" value="P:establishment of mitotic spindle orientation"/>
    <property type="evidence" value="ECO:0000318"/>
    <property type="project" value="GO_Central"/>
</dbReference>
<dbReference type="GO" id="GO:0031023">
    <property type="term" value="P:microtubule organizing center organization"/>
    <property type="evidence" value="ECO:0000318"/>
    <property type="project" value="GO_Central"/>
</dbReference>
<dbReference type="GO" id="GO:0007097">
    <property type="term" value="P:nuclear migration"/>
    <property type="evidence" value="ECO:0000318"/>
    <property type="project" value="GO_Central"/>
</dbReference>
<dbReference type="GO" id="GO:0047496">
    <property type="term" value="P:vesicle transport along microtubule"/>
    <property type="evidence" value="ECO:0000318"/>
    <property type="project" value="GO_Central"/>
</dbReference>
<dbReference type="Gene3D" id="2.130.10.10">
    <property type="entry name" value="YVTN repeat-like/Quinoprotein amine dehydrogenase"/>
    <property type="match status" value="1"/>
</dbReference>
<dbReference type="InterPro" id="IPR015943">
    <property type="entry name" value="WD40/YVTN_repeat-like_dom_sf"/>
</dbReference>
<dbReference type="InterPro" id="IPR036322">
    <property type="entry name" value="WD40_repeat_dom_sf"/>
</dbReference>
<dbReference type="SUPFAM" id="SSF50978">
    <property type="entry name" value="WD40 repeat-like"/>
    <property type="match status" value="2"/>
</dbReference>
<accession>O42948</accession>
<keyword id="KW-0963">Cytoplasm</keyword>
<keyword id="KW-0539">Nucleus</keyword>
<keyword id="KW-1185">Reference proteome</keyword>
<keyword id="KW-0677">Repeat</keyword>
<keyword id="KW-0853">WD repeat</keyword>
<comment type="subcellular location">
    <subcellularLocation>
        <location evidence="1">Cytoplasm</location>
    </subcellularLocation>
    <subcellularLocation>
        <location evidence="1">Nucleus</location>
    </subcellularLocation>
</comment>
<protein>
    <recommendedName>
        <fullName>Uncharacterized WD repeat-containing protein C16H5.13</fullName>
    </recommendedName>
</protein>
<gene>
    <name type="ORF">SPBC16H5.13</name>
</gene>
<sequence length="1026" mass="115551">MDWVALSKSCKTHLLDEGLDVSSIHCFDQYLIVGQCSGQVMVFDVSTDNHFTLIQTFIAHKHSVSSIVCLPFEADGIVDLSIITLDESGLLCQWLLKTCDRRATLQLCDGLCLKLFRLNNNFLAVTGTFLKIYLIRISNFQIVATWTGHEDWPILFPFKDEALLIPVAYSDGSVSLWSVDWSALTFKRNSVTKADVKPTFGKVIDVVPADCISSNYALYVYSDAVVLLESHEKFIASYSLAEITSVFVLADGTACIFTLSSSTLLKLHQSPEPHFELISKYSGDFPWKSCTILKSKPVSLCVYPEKITFNWLTEGTVDSCNLCKLSNTAAVSYAYTDSLNLFLGTTSGLVMFSLFDWYLHNDPAPLYSFTRVSGIVTYMKIFETEHSRSILVVATKTGKAYFYQQLQGERWRFLCERALQSSSITKIIHAKKSLSSGSSGLFIFMSLDGSLCALDESYNLLSYLPSDGAQVETLYSFPDLDQIYVAYDNFQLLNWDVVDQKCSEGNYSDIIDSSFISIGTFDKSNLPTLYHGSCALLTDNLVTVFLDAHDLVLNLNFSNENYIEKTYIDEFLDFIQPPFLNSDIEMEHQLLGTVFDQSSLHLGVGKPDGNAILRFDTEMKSIINTAPNCSALLLYLYFSLMVPLCKYDGLSDTKLTEGILLKLKDLKTVDYSISVLSYVWNNSGKVMQGIIKSMLSRTLELISPEELQRLIYYYFEFFTTTGGEYYLKKEVQHSLYILSLIVSLRPSAFDVSQLKFLSSYLLQKSESMDYDLTAIRLLSNGFSVFSKHIDPAKFIYNLVLSSLENTKDLDDKNSILYRSIVDVSVSNAVLLLTCLCDEVYEQMKSNLRSVILKVVSLAIENTQSEFSLFNQLITEKLLPILYSSRSVEEVHDVTNAIATQFPFACFDSKVEKYSYIDDGDLVVYEIAKRRKVVSKENAECDIQVLSASPSGDYFVGVSATQKECIIWKYSQDFVKFLNLSTPSLTIRKRILLQTNKTNEVEIPEVLWISQSSAEVHIGSTFAIIDL</sequence>
<proteinExistence type="predicted"/>
<evidence type="ECO:0000269" key="1">
    <source>
    </source>
</evidence>
<feature type="chain" id="PRO_0000343432" description="Uncharacterized WD repeat-containing protein C16H5.13">
    <location>
        <begin position="1"/>
        <end position="1026"/>
    </location>
</feature>
<feature type="repeat" description="WD 1">
    <location>
        <begin position="14"/>
        <end position="53"/>
    </location>
</feature>
<feature type="repeat" description="WD 2">
    <location>
        <begin position="62"/>
        <end position="104"/>
    </location>
</feature>
<feature type="repeat" description="WD 3">
    <location>
        <begin position="148"/>
        <end position="187"/>
    </location>
</feature>
<feature type="repeat" description="WD 4">
    <location>
        <begin position="937"/>
        <end position="977"/>
    </location>
</feature>
<reference key="1">
    <citation type="journal article" date="2002" name="Nature">
        <title>The genome sequence of Schizosaccharomyces pombe.</title>
        <authorList>
            <person name="Wood V."/>
            <person name="Gwilliam R."/>
            <person name="Rajandream M.A."/>
            <person name="Lyne M.H."/>
            <person name="Lyne R."/>
            <person name="Stewart A."/>
            <person name="Sgouros J.G."/>
            <person name="Peat N."/>
            <person name="Hayles J."/>
            <person name="Baker S.G."/>
            <person name="Basham D."/>
            <person name="Bowman S."/>
            <person name="Brooks K."/>
            <person name="Brown D."/>
            <person name="Brown S."/>
            <person name="Chillingworth T."/>
            <person name="Churcher C.M."/>
            <person name="Collins M."/>
            <person name="Connor R."/>
            <person name="Cronin A."/>
            <person name="Davis P."/>
            <person name="Feltwell T."/>
            <person name="Fraser A."/>
            <person name="Gentles S."/>
            <person name="Goble A."/>
            <person name="Hamlin N."/>
            <person name="Harris D.E."/>
            <person name="Hidalgo J."/>
            <person name="Hodgson G."/>
            <person name="Holroyd S."/>
            <person name="Hornsby T."/>
            <person name="Howarth S."/>
            <person name="Huckle E.J."/>
            <person name="Hunt S."/>
            <person name="Jagels K."/>
            <person name="James K.D."/>
            <person name="Jones L."/>
            <person name="Jones M."/>
            <person name="Leather S."/>
            <person name="McDonald S."/>
            <person name="McLean J."/>
            <person name="Mooney P."/>
            <person name="Moule S."/>
            <person name="Mungall K.L."/>
            <person name="Murphy L.D."/>
            <person name="Niblett D."/>
            <person name="Odell C."/>
            <person name="Oliver K."/>
            <person name="O'Neil S."/>
            <person name="Pearson D."/>
            <person name="Quail M.A."/>
            <person name="Rabbinowitsch E."/>
            <person name="Rutherford K.M."/>
            <person name="Rutter S."/>
            <person name="Saunders D."/>
            <person name="Seeger K."/>
            <person name="Sharp S."/>
            <person name="Skelton J."/>
            <person name="Simmonds M.N."/>
            <person name="Squares R."/>
            <person name="Squares S."/>
            <person name="Stevens K."/>
            <person name="Taylor K."/>
            <person name="Taylor R.G."/>
            <person name="Tivey A."/>
            <person name="Walsh S.V."/>
            <person name="Warren T."/>
            <person name="Whitehead S."/>
            <person name="Woodward J.R."/>
            <person name="Volckaert G."/>
            <person name="Aert R."/>
            <person name="Robben J."/>
            <person name="Grymonprez B."/>
            <person name="Weltjens I."/>
            <person name="Vanstreels E."/>
            <person name="Rieger M."/>
            <person name="Schaefer M."/>
            <person name="Mueller-Auer S."/>
            <person name="Gabel C."/>
            <person name="Fuchs M."/>
            <person name="Duesterhoeft A."/>
            <person name="Fritzc C."/>
            <person name="Holzer E."/>
            <person name="Moestl D."/>
            <person name="Hilbert H."/>
            <person name="Borzym K."/>
            <person name="Langer I."/>
            <person name="Beck A."/>
            <person name="Lehrach H."/>
            <person name="Reinhardt R."/>
            <person name="Pohl T.M."/>
            <person name="Eger P."/>
            <person name="Zimmermann W."/>
            <person name="Wedler H."/>
            <person name="Wambutt R."/>
            <person name="Purnelle B."/>
            <person name="Goffeau A."/>
            <person name="Cadieu E."/>
            <person name="Dreano S."/>
            <person name="Gloux S."/>
            <person name="Lelaure V."/>
            <person name="Mottier S."/>
            <person name="Galibert F."/>
            <person name="Aves S.J."/>
            <person name="Xiang Z."/>
            <person name="Hunt C."/>
            <person name="Moore K."/>
            <person name="Hurst S.M."/>
            <person name="Lucas M."/>
            <person name="Rochet M."/>
            <person name="Gaillardin C."/>
            <person name="Tallada V.A."/>
            <person name="Garzon A."/>
            <person name="Thode G."/>
            <person name="Daga R.R."/>
            <person name="Cruzado L."/>
            <person name="Jimenez J."/>
            <person name="Sanchez M."/>
            <person name="del Rey F."/>
            <person name="Benito J."/>
            <person name="Dominguez A."/>
            <person name="Revuelta J.L."/>
            <person name="Moreno S."/>
            <person name="Armstrong J."/>
            <person name="Forsburg S.L."/>
            <person name="Cerutti L."/>
            <person name="Lowe T."/>
            <person name="McCombie W.R."/>
            <person name="Paulsen I."/>
            <person name="Potashkin J."/>
            <person name="Shpakovski G.V."/>
            <person name="Ussery D."/>
            <person name="Barrell B.G."/>
            <person name="Nurse P."/>
        </authorList>
    </citation>
    <scope>NUCLEOTIDE SEQUENCE [LARGE SCALE GENOMIC DNA]</scope>
    <source>
        <strain>972 / ATCC 24843</strain>
    </source>
</reference>
<reference key="2">
    <citation type="journal article" date="2006" name="Nat. Biotechnol.">
        <title>ORFeome cloning and global analysis of protein localization in the fission yeast Schizosaccharomyces pombe.</title>
        <authorList>
            <person name="Matsuyama A."/>
            <person name="Arai R."/>
            <person name="Yashiroda Y."/>
            <person name="Shirai A."/>
            <person name="Kamata A."/>
            <person name="Sekido S."/>
            <person name="Kobayashi Y."/>
            <person name="Hashimoto A."/>
            <person name="Hamamoto M."/>
            <person name="Hiraoka Y."/>
            <person name="Horinouchi S."/>
            <person name="Yoshida M."/>
        </authorList>
    </citation>
    <scope>SUBCELLULAR LOCATION [LARGE SCALE ANALYSIS]</scope>
</reference>
<organism>
    <name type="scientific">Schizosaccharomyces pombe (strain 972 / ATCC 24843)</name>
    <name type="common">Fission yeast</name>
    <dbReference type="NCBI Taxonomy" id="284812"/>
    <lineage>
        <taxon>Eukaryota</taxon>
        <taxon>Fungi</taxon>
        <taxon>Dikarya</taxon>
        <taxon>Ascomycota</taxon>
        <taxon>Taphrinomycotina</taxon>
        <taxon>Schizosaccharomycetes</taxon>
        <taxon>Schizosaccharomycetales</taxon>
        <taxon>Schizosaccharomycetaceae</taxon>
        <taxon>Schizosaccharomyces</taxon>
    </lineage>
</organism>